<reference key="1">
    <citation type="journal article" date="2008" name="Chem. Biol. Interact.">
        <title>Extending the Bacillus cereus group genomics to putative food-borne pathogens of different toxicity.</title>
        <authorList>
            <person name="Lapidus A."/>
            <person name="Goltsman E."/>
            <person name="Auger S."/>
            <person name="Galleron N."/>
            <person name="Segurens B."/>
            <person name="Dossat C."/>
            <person name="Land M.L."/>
            <person name="Broussolle V."/>
            <person name="Brillard J."/>
            <person name="Guinebretiere M.-H."/>
            <person name="Sanchis V."/>
            <person name="Nguen-the C."/>
            <person name="Lereclus D."/>
            <person name="Richardson P."/>
            <person name="Wincker P."/>
            <person name="Weissenbach J."/>
            <person name="Ehrlich S.D."/>
            <person name="Sorokin A."/>
        </authorList>
    </citation>
    <scope>NUCLEOTIDE SEQUENCE [LARGE SCALE GENOMIC DNA]</scope>
    <source>
        <strain>DSM 22905 / CIP 110041 / 391-98 / NVH 391-98</strain>
    </source>
</reference>
<proteinExistence type="inferred from homology"/>
<feature type="chain" id="PRO_0000373845" description="Uncharacterized methyltransferase Bcer98_3087">
    <location>
        <begin position="1"/>
        <end position="212"/>
    </location>
</feature>
<feature type="binding site" evidence="1">
    <location>
        <position position="53"/>
    </location>
    <ligand>
        <name>S-adenosyl-L-methionine</name>
        <dbReference type="ChEBI" id="CHEBI:59789"/>
    </ligand>
</feature>
<feature type="binding site" evidence="1">
    <location>
        <position position="74"/>
    </location>
    <ligand>
        <name>S-adenosyl-L-methionine</name>
        <dbReference type="ChEBI" id="CHEBI:59789"/>
    </ligand>
</feature>
<feature type="binding site" evidence="1">
    <location>
        <position position="97"/>
    </location>
    <ligand>
        <name>S-adenosyl-L-methionine</name>
        <dbReference type="ChEBI" id="CHEBI:59789"/>
    </ligand>
</feature>
<protein>
    <recommendedName>
        <fullName evidence="1">Uncharacterized methyltransferase Bcer98_3087</fullName>
        <ecNumber evidence="1">2.1.1.-</ecNumber>
    </recommendedName>
</protein>
<keyword id="KW-0489">Methyltransferase</keyword>
<keyword id="KW-0949">S-adenosyl-L-methionine</keyword>
<keyword id="KW-0808">Transferase</keyword>
<name>Y3087_BACCN</name>
<evidence type="ECO:0000255" key="1">
    <source>
        <dbReference type="HAMAP-Rule" id="MF_02100"/>
    </source>
</evidence>
<dbReference type="EC" id="2.1.1.-" evidence="1"/>
<dbReference type="EMBL" id="CP000764">
    <property type="protein sequence ID" value="ABS23311.1"/>
    <property type="molecule type" value="Genomic_DNA"/>
</dbReference>
<dbReference type="RefSeq" id="WP_012095548.1">
    <property type="nucleotide sequence ID" value="NC_009674.1"/>
</dbReference>
<dbReference type="SMR" id="A7GT53"/>
<dbReference type="STRING" id="315749.Bcer98_3087"/>
<dbReference type="GeneID" id="33898334"/>
<dbReference type="KEGG" id="bcy:Bcer98_3087"/>
<dbReference type="eggNOG" id="COG2226">
    <property type="taxonomic scope" value="Bacteria"/>
</dbReference>
<dbReference type="HOGENOM" id="CLU_111961_0_0_9"/>
<dbReference type="OrthoDB" id="465705at2"/>
<dbReference type="Proteomes" id="UP000002300">
    <property type="component" value="Chromosome"/>
</dbReference>
<dbReference type="GO" id="GO:0008757">
    <property type="term" value="F:S-adenosylmethionine-dependent methyltransferase activity"/>
    <property type="evidence" value="ECO:0007669"/>
    <property type="project" value="UniProtKB-UniRule"/>
</dbReference>
<dbReference type="GO" id="GO:0032259">
    <property type="term" value="P:methylation"/>
    <property type="evidence" value="ECO:0007669"/>
    <property type="project" value="UniProtKB-KW"/>
</dbReference>
<dbReference type="CDD" id="cd02440">
    <property type="entry name" value="AdoMet_MTases"/>
    <property type="match status" value="1"/>
</dbReference>
<dbReference type="Gene3D" id="3.40.50.150">
    <property type="entry name" value="Vaccinia Virus protein VP39"/>
    <property type="match status" value="1"/>
</dbReference>
<dbReference type="HAMAP" id="MF_02100">
    <property type="entry name" value="Methyltr_YrrT"/>
    <property type="match status" value="1"/>
</dbReference>
<dbReference type="InterPro" id="IPR041698">
    <property type="entry name" value="Methyltransf_25"/>
</dbReference>
<dbReference type="InterPro" id="IPR029063">
    <property type="entry name" value="SAM-dependent_MTases_sf"/>
</dbReference>
<dbReference type="InterPro" id="IPR023553">
    <property type="entry name" value="Uncharacterised_MeTfrase_YrrT"/>
</dbReference>
<dbReference type="PANTHER" id="PTHR43861:SF1">
    <property type="entry name" value="TRANS-ACONITATE 2-METHYLTRANSFERASE"/>
    <property type="match status" value="1"/>
</dbReference>
<dbReference type="PANTHER" id="PTHR43861">
    <property type="entry name" value="TRANS-ACONITATE 2-METHYLTRANSFERASE-RELATED"/>
    <property type="match status" value="1"/>
</dbReference>
<dbReference type="Pfam" id="PF13649">
    <property type="entry name" value="Methyltransf_25"/>
    <property type="match status" value="1"/>
</dbReference>
<dbReference type="SUPFAM" id="SSF53335">
    <property type="entry name" value="S-adenosyl-L-methionine-dependent methyltransferases"/>
    <property type="match status" value="1"/>
</dbReference>
<comment type="function">
    <text evidence="1">Could be a S-adenosyl-L-methionine-dependent methyltransferase.</text>
</comment>
<comment type="similarity">
    <text evidence="1">Belongs to the methyltransferase superfamily. YrrT family.</text>
</comment>
<organism>
    <name type="scientific">Bacillus cytotoxicus (strain DSM 22905 / CIP 110041 / 391-98 / NVH 391-98)</name>
    <dbReference type="NCBI Taxonomy" id="315749"/>
    <lineage>
        <taxon>Bacteria</taxon>
        <taxon>Bacillati</taxon>
        <taxon>Bacillota</taxon>
        <taxon>Bacilli</taxon>
        <taxon>Bacillales</taxon>
        <taxon>Bacillaceae</taxon>
        <taxon>Bacillus</taxon>
        <taxon>Bacillus cereus group</taxon>
    </lineage>
</organism>
<sequence length="212" mass="24373">MGTEFNGLFDEWAHTYDSFVQGEDIQYKEVFAHYEEILEDVVNKSFGNVLEFGVGTGNLTNKLLLAGRTVYGIEPSREMRAIAKEKLPEGFTITEGDFLKFDVPNTIDTIVSTYAFHHLTDEEKDRAIAKYSQLLNKGGKIVFADTIFVDQEAYDKTVETAKQRGFHQLANDLQTEYYTRIPIMQSIFEKNGFHVTFTRLNHFVWVMEATKQ</sequence>
<gene>
    <name type="ordered locus">Bcer98_3087</name>
</gene>
<accession>A7GT53</accession>